<proteinExistence type="inferred from homology"/>
<evidence type="ECO:0000255" key="1">
    <source>
        <dbReference type="HAMAP-Rule" id="MF_00743"/>
    </source>
</evidence>
<accession>Q8CUH5</accession>
<feature type="chain" id="PRO_0000161293" description="Fumarate hydratase class II">
    <location>
        <begin position="1"/>
        <end position="461"/>
    </location>
</feature>
<feature type="active site" description="Proton donor/acceptor" evidence="1">
    <location>
        <position position="186"/>
    </location>
</feature>
<feature type="active site" evidence="1">
    <location>
        <position position="316"/>
    </location>
</feature>
<feature type="binding site" evidence="1">
    <location>
        <begin position="97"/>
        <end position="99"/>
    </location>
    <ligand>
        <name>substrate</name>
    </ligand>
</feature>
<feature type="binding site" description="in site B" evidence="1">
    <location>
        <begin position="127"/>
        <end position="130"/>
    </location>
    <ligand>
        <name>substrate</name>
    </ligand>
</feature>
<feature type="binding site" evidence="1">
    <location>
        <begin position="137"/>
        <end position="139"/>
    </location>
    <ligand>
        <name>substrate</name>
    </ligand>
</feature>
<feature type="binding site" evidence="1">
    <location>
        <position position="185"/>
    </location>
    <ligand>
        <name>substrate</name>
    </ligand>
</feature>
<feature type="binding site" evidence="1">
    <location>
        <position position="317"/>
    </location>
    <ligand>
        <name>substrate</name>
    </ligand>
</feature>
<feature type="binding site" evidence="1">
    <location>
        <begin position="322"/>
        <end position="324"/>
    </location>
    <ligand>
        <name>substrate</name>
    </ligand>
</feature>
<feature type="site" description="Important for catalytic activity" evidence="1">
    <location>
        <position position="329"/>
    </location>
</feature>
<comment type="function">
    <text evidence="1">Involved in the TCA cycle. Catalyzes the stereospecific interconversion of fumarate to L-malate.</text>
</comment>
<comment type="catalytic activity">
    <reaction evidence="1">
        <text>(S)-malate = fumarate + H2O</text>
        <dbReference type="Rhea" id="RHEA:12460"/>
        <dbReference type="ChEBI" id="CHEBI:15377"/>
        <dbReference type="ChEBI" id="CHEBI:15589"/>
        <dbReference type="ChEBI" id="CHEBI:29806"/>
        <dbReference type="EC" id="4.2.1.2"/>
    </reaction>
</comment>
<comment type="pathway">
    <text evidence="1">Carbohydrate metabolism; tricarboxylic acid cycle; (S)-malate from fumarate: step 1/1.</text>
</comment>
<comment type="subunit">
    <text evidence="1">Homotetramer.</text>
</comment>
<comment type="subcellular location">
    <subcellularLocation>
        <location evidence="1">Cytoplasm</location>
    </subcellularLocation>
</comment>
<comment type="miscellaneous">
    <text evidence="1">There are 2 substrate-binding sites: the catalytic A site, and the non-catalytic B site that may play a role in the transfer of substrate or product between the active site and the solvent. Alternatively, the B site may bind allosteric effectors.</text>
</comment>
<comment type="similarity">
    <text evidence="1">Belongs to the class-II fumarase/aspartase family. Fumarase subfamily.</text>
</comment>
<sequence>MDYRVEKDTIGEIQVPADKYWGAQTQRSKQNFPIGNEKMPVEIIKAFAILKRSTAEANFELGLMERDKMEAIQYAADQVLNDSLTDHFPLVVWQTGSGTQSNMNVNEVLAFVGNKWLQEQGSDLKLHPNDDVNKSQSSNDTYPTAMHIAAVLKLEDTVLPALSQLKNTFAEKQSAFENIVKIGRTHLQDATPLTLGQEISGWHRMLEKSETMISESLEHLRELAIGGTAVGTGLNAHPDFSEKVCKAISTFTNKKFISAKNKFHSLTSHDETVYAHGALKGLAADLMKIANDVRWLASGPRCGIGEITIPANEPGSSIMPGKVNPTQSEAVTMVVTQVMGNDAAIGFAASQGNFELNVFKPVIAYNFLQSSQLLADSIISFDERCAVGIEPNHEQIEKNLNDSLMLVTALNPHIGYENAAKIAKKAFADNSTLKETAVELGLLTEEQFDEYVNPEEMTYPK</sequence>
<organism>
    <name type="scientific">Oceanobacillus iheyensis (strain DSM 14371 / CIP 107618 / JCM 11309 / KCTC 3954 / HTE831)</name>
    <dbReference type="NCBI Taxonomy" id="221109"/>
    <lineage>
        <taxon>Bacteria</taxon>
        <taxon>Bacillati</taxon>
        <taxon>Bacillota</taxon>
        <taxon>Bacilli</taxon>
        <taxon>Bacillales</taxon>
        <taxon>Bacillaceae</taxon>
        <taxon>Oceanobacillus</taxon>
    </lineage>
</organism>
<protein>
    <recommendedName>
        <fullName evidence="1">Fumarate hydratase class II</fullName>
        <shortName evidence="1">Fumarase C</shortName>
        <ecNumber evidence="1">4.2.1.2</ecNumber>
    </recommendedName>
    <alternativeName>
        <fullName evidence="1">Aerobic fumarase</fullName>
    </alternativeName>
    <alternativeName>
        <fullName evidence="1">Iron-independent fumarase</fullName>
    </alternativeName>
</protein>
<gene>
    <name evidence="1" type="primary">fumC</name>
    <name type="ordered locus">OB1132</name>
</gene>
<dbReference type="EC" id="4.2.1.2" evidence="1"/>
<dbReference type="EMBL" id="BA000028">
    <property type="protein sequence ID" value="BAC13088.1"/>
    <property type="molecule type" value="Genomic_DNA"/>
</dbReference>
<dbReference type="RefSeq" id="WP_011065533.1">
    <property type="nucleotide sequence ID" value="NC_004193.1"/>
</dbReference>
<dbReference type="SMR" id="Q8CUH5"/>
<dbReference type="STRING" id="221109.gene:10733371"/>
<dbReference type="KEGG" id="oih:OB1132"/>
<dbReference type="eggNOG" id="COG0114">
    <property type="taxonomic scope" value="Bacteria"/>
</dbReference>
<dbReference type="HOGENOM" id="CLU_021594_4_1_9"/>
<dbReference type="OrthoDB" id="9802809at2"/>
<dbReference type="PhylomeDB" id="Q8CUH5"/>
<dbReference type="UniPathway" id="UPA00223">
    <property type="reaction ID" value="UER01007"/>
</dbReference>
<dbReference type="Proteomes" id="UP000000822">
    <property type="component" value="Chromosome"/>
</dbReference>
<dbReference type="GO" id="GO:0005737">
    <property type="term" value="C:cytoplasm"/>
    <property type="evidence" value="ECO:0007669"/>
    <property type="project" value="UniProtKB-SubCell"/>
</dbReference>
<dbReference type="GO" id="GO:0004333">
    <property type="term" value="F:fumarate hydratase activity"/>
    <property type="evidence" value="ECO:0007669"/>
    <property type="project" value="UniProtKB-UniRule"/>
</dbReference>
<dbReference type="GO" id="GO:0006106">
    <property type="term" value="P:fumarate metabolic process"/>
    <property type="evidence" value="ECO:0007669"/>
    <property type="project" value="InterPro"/>
</dbReference>
<dbReference type="GO" id="GO:0006108">
    <property type="term" value="P:malate metabolic process"/>
    <property type="evidence" value="ECO:0007669"/>
    <property type="project" value="TreeGrafter"/>
</dbReference>
<dbReference type="GO" id="GO:0006099">
    <property type="term" value="P:tricarboxylic acid cycle"/>
    <property type="evidence" value="ECO:0007669"/>
    <property type="project" value="UniProtKB-UniRule"/>
</dbReference>
<dbReference type="CDD" id="cd01362">
    <property type="entry name" value="Fumarase_classII"/>
    <property type="match status" value="1"/>
</dbReference>
<dbReference type="FunFam" id="1.10.40.30:FF:000002">
    <property type="entry name" value="Fumarate hydratase class II"/>
    <property type="match status" value="1"/>
</dbReference>
<dbReference type="FunFam" id="1.10.275.10:FF:000001">
    <property type="entry name" value="Fumarate hydratase, mitochondrial"/>
    <property type="match status" value="1"/>
</dbReference>
<dbReference type="FunFam" id="1.20.200.10:FF:000001">
    <property type="entry name" value="Fumarate hydratase, mitochondrial"/>
    <property type="match status" value="1"/>
</dbReference>
<dbReference type="Gene3D" id="1.10.40.30">
    <property type="entry name" value="Fumarase/aspartase (C-terminal domain)"/>
    <property type="match status" value="1"/>
</dbReference>
<dbReference type="Gene3D" id="1.20.200.10">
    <property type="entry name" value="Fumarase/aspartase (Central domain)"/>
    <property type="match status" value="1"/>
</dbReference>
<dbReference type="Gene3D" id="1.10.275.10">
    <property type="entry name" value="Fumarase/aspartase (N-terminal domain)"/>
    <property type="match status" value="1"/>
</dbReference>
<dbReference type="HAMAP" id="MF_00743">
    <property type="entry name" value="FumaraseC"/>
    <property type="match status" value="1"/>
</dbReference>
<dbReference type="InterPro" id="IPR005677">
    <property type="entry name" value="Fum_hydII"/>
</dbReference>
<dbReference type="InterPro" id="IPR024083">
    <property type="entry name" value="Fumarase/histidase_N"/>
</dbReference>
<dbReference type="InterPro" id="IPR018951">
    <property type="entry name" value="Fumarase_C_C"/>
</dbReference>
<dbReference type="InterPro" id="IPR020557">
    <property type="entry name" value="Fumarate_lyase_CS"/>
</dbReference>
<dbReference type="InterPro" id="IPR000362">
    <property type="entry name" value="Fumarate_lyase_fam"/>
</dbReference>
<dbReference type="InterPro" id="IPR022761">
    <property type="entry name" value="Fumarate_lyase_N"/>
</dbReference>
<dbReference type="InterPro" id="IPR008948">
    <property type="entry name" value="L-Aspartase-like"/>
</dbReference>
<dbReference type="NCBIfam" id="TIGR00979">
    <property type="entry name" value="fumC_II"/>
    <property type="match status" value="1"/>
</dbReference>
<dbReference type="NCBIfam" id="NF008909">
    <property type="entry name" value="PRK12273.1"/>
    <property type="match status" value="1"/>
</dbReference>
<dbReference type="PANTHER" id="PTHR11444">
    <property type="entry name" value="ASPARTATEAMMONIA/ARGININOSUCCINATE/ADENYLOSUCCINATE LYASE"/>
    <property type="match status" value="1"/>
</dbReference>
<dbReference type="PANTHER" id="PTHR11444:SF1">
    <property type="entry name" value="FUMARATE HYDRATASE, MITOCHONDRIAL"/>
    <property type="match status" value="1"/>
</dbReference>
<dbReference type="Pfam" id="PF10415">
    <property type="entry name" value="FumaraseC_C"/>
    <property type="match status" value="1"/>
</dbReference>
<dbReference type="Pfam" id="PF00206">
    <property type="entry name" value="Lyase_1"/>
    <property type="match status" value="1"/>
</dbReference>
<dbReference type="PRINTS" id="PR00149">
    <property type="entry name" value="FUMRATELYASE"/>
</dbReference>
<dbReference type="SUPFAM" id="SSF48557">
    <property type="entry name" value="L-aspartase-like"/>
    <property type="match status" value="1"/>
</dbReference>
<dbReference type="PROSITE" id="PS00163">
    <property type="entry name" value="FUMARATE_LYASES"/>
    <property type="match status" value="1"/>
</dbReference>
<keyword id="KW-0963">Cytoplasm</keyword>
<keyword id="KW-0456">Lyase</keyword>
<keyword id="KW-1185">Reference proteome</keyword>
<keyword id="KW-0816">Tricarboxylic acid cycle</keyword>
<name>FUMC_OCEIH</name>
<reference key="1">
    <citation type="journal article" date="2002" name="Nucleic Acids Res.">
        <title>Genome sequence of Oceanobacillus iheyensis isolated from the Iheya Ridge and its unexpected adaptive capabilities to extreme environments.</title>
        <authorList>
            <person name="Takami H."/>
            <person name="Takaki Y."/>
            <person name="Uchiyama I."/>
        </authorList>
    </citation>
    <scope>NUCLEOTIDE SEQUENCE [LARGE SCALE GENOMIC DNA]</scope>
    <source>
        <strain>DSM 14371 / CIP 107618 / JCM 11309 / KCTC 3954 / HTE831</strain>
    </source>
</reference>